<keyword id="KW-0881">Chlorophyll catabolism</keyword>
<keyword id="KW-0963">Cytoplasm</keyword>
<keyword id="KW-0903">Direct protein sequencing</keyword>
<keyword id="KW-0378">Hydrolase</keyword>
<keyword id="KW-1185">Reference proteome</keyword>
<feature type="chain" id="PRO_0000391350" description="Pheophorbidase">
    <location>
        <begin position="1"/>
        <end position="263"/>
    </location>
</feature>
<feature type="domain" description="AB hydrolase-1" evidence="2">
    <location>
        <begin position="13"/>
        <end position="244"/>
    </location>
</feature>
<feature type="active site" description="Acyl-ester intermediate" evidence="1">
    <location>
        <position position="88"/>
    </location>
</feature>
<feature type="active site" description="Charge relay system" evidence="3">
    <location>
        <position position="212"/>
    </location>
</feature>
<feature type="active site" description="Charge relay system" evidence="3">
    <location>
        <position position="240"/>
    </location>
</feature>
<name>PPD_RAPSA</name>
<organism>
    <name type="scientific">Raphanus sativus</name>
    <name type="common">Radish</name>
    <name type="synonym">Raphanus raphanistrum var. sativus</name>
    <dbReference type="NCBI Taxonomy" id="3726"/>
    <lineage>
        <taxon>Eukaryota</taxon>
        <taxon>Viridiplantae</taxon>
        <taxon>Streptophyta</taxon>
        <taxon>Embryophyta</taxon>
        <taxon>Tracheophyta</taxon>
        <taxon>Spermatophyta</taxon>
        <taxon>Magnoliopsida</taxon>
        <taxon>eudicotyledons</taxon>
        <taxon>Gunneridae</taxon>
        <taxon>Pentapetalae</taxon>
        <taxon>rosids</taxon>
        <taxon>malvids</taxon>
        <taxon>Brassicales</taxon>
        <taxon>Brassicaceae</taxon>
        <taxon>Brassiceae</taxon>
        <taxon>Raphanus</taxon>
    </lineage>
</organism>
<accession>Q2V0W1</accession>
<dbReference type="EC" id="3.1.1.82"/>
<dbReference type="EMBL" id="AB218276">
    <property type="protein sequence ID" value="BAE54383.1"/>
    <property type="molecule type" value="mRNA"/>
</dbReference>
<dbReference type="SMR" id="Q2V0W1"/>
<dbReference type="ESTHER" id="rapsa-q2v0w1">
    <property type="family name" value="Hydroxynitrile_lyase"/>
</dbReference>
<dbReference type="KEGG" id="ag:BAE54383"/>
<dbReference type="BioCyc" id="MetaCyc:MONOMER-14131"/>
<dbReference type="Proteomes" id="UP000504610">
    <property type="component" value="Unplaced"/>
</dbReference>
<dbReference type="GO" id="GO:0005737">
    <property type="term" value="C:cytoplasm"/>
    <property type="evidence" value="ECO:0007669"/>
    <property type="project" value="UniProtKB-SubCell"/>
</dbReference>
<dbReference type="GO" id="GO:0080030">
    <property type="term" value="F:methyl indole-3-acetate esterase activity"/>
    <property type="evidence" value="ECO:0007669"/>
    <property type="project" value="TreeGrafter"/>
</dbReference>
<dbReference type="GO" id="GO:0080032">
    <property type="term" value="F:methyl jasmonate esterase activity"/>
    <property type="evidence" value="ECO:0007669"/>
    <property type="project" value="TreeGrafter"/>
</dbReference>
<dbReference type="GO" id="GO:0080031">
    <property type="term" value="F:methyl salicylate esterase activity"/>
    <property type="evidence" value="ECO:0007669"/>
    <property type="project" value="TreeGrafter"/>
</dbReference>
<dbReference type="GO" id="GO:0035560">
    <property type="term" value="F:pheophorbidase activity"/>
    <property type="evidence" value="ECO:0000314"/>
    <property type="project" value="UniProtKB"/>
</dbReference>
<dbReference type="GO" id="GO:0042803">
    <property type="term" value="F:protein homodimerization activity"/>
    <property type="evidence" value="ECO:0000314"/>
    <property type="project" value="UniProtKB"/>
</dbReference>
<dbReference type="GO" id="GO:0033310">
    <property type="term" value="P:chlorophyll a catabolic process"/>
    <property type="evidence" value="ECO:0000314"/>
    <property type="project" value="UniProtKB"/>
</dbReference>
<dbReference type="GO" id="GO:0009694">
    <property type="term" value="P:jasmonic acid metabolic process"/>
    <property type="evidence" value="ECO:0007669"/>
    <property type="project" value="TreeGrafter"/>
</dbReference>
<dbReference type="GO" id="GO:0010150">
    <property type="term" value="P:leaf senescence"/>
    <property type="evidence" value="ECO:0000270"/>
    <property type="project" value="UniProtKB"/>
</dbReference>
<dbReference type="GO" id="GO:0009696">
    <property type="term" value="P:salicylic acid metabolic process"/>
    <property type="evidence" value="ECO:0007669"/>
    <property type="project" value="TreeGrafter"/>
</dbReference>
<dbReference type="FunFam" id="3.40.50.1820:FF:000025">
    <property type="entry name" value="putative methylesterase 11, chloroplastic"/>
    <property type="match status" value="1"/>
</dbReference>
<dbReference type="Gene3D" id="3.40.50.1820">
    <property type="entry name" value="alpha/beta hydrolase"/>
    <property type="match status" value="1"/>
</dbReference>
<dbReference type="InterPro" id="IPR000073">
    <property type="entry name" value="AB_hydrolase_1"/>
</dbReference>
<dbReference type="InterPro" id="IPR029058">
    <property type="entry name" value="AB_hydrolase_fold"/>
</dbReference>
<dbReference type="InterPro" id="IPR045889">
    <property type="entry name" value="MES/HNL"/>
</dbReference>
<dbReference type="PANTHER" id="PTHR10992">
    <property type="entry name" value="METHYLESTERASE FAMILY MEMBER"/>
    <property type="match status" value="1"/>
</dbReference>
<dbReference type="PANTHER" id="PTHR10992:SF1026">
    <property type="entry name" value="PFDCC METHYLESTERASE MES16"/>
    <property type="match status" value="1"/>
</dbReference>
<dbReference type="Pfam" id="PF12697">
    <property type="entry name" value="Abhydrolase_6"/>
    <property type="match status" value="1"/>
</dbReference>
<dbReference type="SUPFAM" id="SSF53474">
    <property type="entry name" value="alpha/beta-Hydrolases"/>
    <property type="match status" value="1"/>
</dbReference>
<dbReference type="PROSITE" id="PS00120">
    <property type="entry name" value="LIPASE_SER"/>
    <property type="match status" value="1"/>
</dbReference>
<gene>
    <name type="primary">PPD</name>
</gene>
<reference key="1">
    <citation type="journal article" date="2006" name="Plant Physiol.">
        <title>Characterization and cloning of the chlorophyll-degrading enzyme pheophorbidase from cotyledons of radish.</title>
        <authorList>
            <person name="Suzuki Y."/>
            <person name="Amano T."/>
            <person name="Shioi Y."/>
        </authorList>
    </citation>
    <scope>NUCLEOTIDE SEQUENCE [MRNA]</scope>
    <scope>PROTEIN SEQUENCE OF 8-35 AND 133-163</scope>
    <scope>INDUCTION</scope>
    <scope>SUBUNIT</scope>
    <scope>CATALYTIC ACTIVITY</scope>
    <scope>BIOPHYSICOCHEMICAL PROPERTIES</scope>
</reference>
<reference key="2">
    <citation type="journal article" date="2002" name="Photosyn. Res.">
        <title>Two enzymatic reaction pathways in the formation of pyropheophorbide a.</title>
        <authorList>
            <person name="Suzuki Y."/>
            <person name="Doi M."/>
            <person name="Shioi Y."/>
        </authorList>
    </citation>
    <scope>IDENTIFICATION</scope>
    <scope>CATALYTIC ACTIVITY</scope>
    <scope>INHIBITION BY METHANOL AND PMSF</scope>
</reference>
<reference key="3">
    <citation type="journal article" date="2008" name="Photochem. Photobiol. Sci.">
        <title>Expression and purification of pheophorbidase, an enzyme catalyzing the formation of pyropheophorbide during chlorophyll degradation: comparison with the native enzyme.</title>
        <authorList>
            <person name="Suzuki Y."/>
            <person name="Soga K."/>
            <person name="Yoshimatsu K."/>
            <person name="Shioi Y."/>
        </authorList>
    </citation>
    <scope>CATALYTIC ACTIVITY</scope>
    <scope>BIOPHYSICOCHEMICAL PROPERTIES</scope>
</reference>
<protein>
    <recommendedName>
        <fullName>Pheophorbidase</fullName>
        <shortName>RsPPD</shortName>
        <ecNumber>3.1.1.82</ecNumber>
    </recommendedName>
</protein>
<evidence type="ECO:0000250" key="1"/>
<evidence type="ECO:0000255" key="2"/>
<evidence type="ECO:0000255" key="3">
    <source>
        <dbReference type="PROSITE-ProRule" id="PRU10037"/>
    </source>
</evidence>
<evidence type="ECO:0000269" key="4">
    <source>
    </source>
</evidence>
<evidence type="ECO:0000269" key="5">
    <source>
    </source>
</evidence>
<evidence type="ECO:0000269" key="6">
    <source>
    </source>
</evidence>
<evidence type="ECO:0000305" key="7"/>
<comment type="function">
    <text>Involved in chlorophyll degradation. Specific for the pheophorbides of the dihydroporphyrin and tetrahydroporphyrin types. Chlorophyllide a, pheophytin a and the nonfluorescent chlorophyll catabolite (NCC) are not used as substrates.</text>
</comment>
<comment type="catalytic activity">
    <reaction evidence="4 5 6">
        <text>pheophorbide a + H2O + H(+) = pyropheophorbide a + methanol + CO2</text>
        <dbReference type="Rhea" id="RHEA:32483"/>
        <dbReference type="ChEBI" id="CHEBI:15377"/>
        <dbReference type="ChEBI" id="CHEBI:15378"/>
        <dbReference type="ChEBI" id="CHEBI:16526"/>
        <dbReference type="ChEBI" id="CHEBI:17790"/>
        <dbReference type="ChEBI" id="CHEBI:58687"/>
        <dbReference type="ChEBI" id="CHEBI:58742"/>
        <dbReference type="EC" id="3.1.1.82"/>
    </reaction>
</comment>
<comment type="activity regulation">
    <text>Inhibited by methanol and phenylmethylsulfonicfluoride (PMSF).</text>
</comment>
<comment type="biophysicochemical properties">
    <kinetics>
        <KM evidence="5 6">15.1 uM for pheophorbide a (for the native enzyme)</KM>
        <KM evidence="5 6">95.5 uM for pheophorbide a (for the PPD-GST recombinant enzyme)</KM>
        <KM evidence="5 6">240 uM for pheophorbide b (for the native enzyme)</KM>
        <KM evidence="5 6">40 uM for bacterio-pheophorbide a (for the native enzyme)</KM>
    </kinetics>
    <phDependence>
        <text evidence="5 6">Optimum pH is 6.5 for the native enzyme and 7.0-7.5 for the PPD-GST recombinant enzyme.</text>
    </phDependence>
</comment>
<comment type="subunit">
    <text evidence="5">Homodimer.</text>
</comment>
<comment type="subcellular location">
    <subcellularLocation>
        <location evidence="7">Cytoplasm</location>
    </subcellularLocation>
</comment>
<comment type="induction">
    <text evidence="5">Up-regulated by senescence.</text>
</comment>
<comment type="miscellaneous">
    <text>An additional type 1 isoform with the same enzymatic activity seems to exist.</text>
</comment>
<comment type="similarity">
    <text evidence="7">Belongs to the AB hydrolase superfamily.</text>
</comment>
<proteinExistence type="evidence at protein level"/>
<sequence length="263" mass="28974">MGGEGGADDSVVHFVFVHGASHGAWCWYKLTTLLVAAGFKATSVDLTGAGINLTDSNTVFDFDHYNRPLFSLLSDLPSHHKIVLVGHSIGGGSVTEALCKFTDKISMVVYLAADMVQPGSTSSTHDSIMTVGEEDIWEYIYGEGADKPPTGVLMKEEFRRHYYYSQSPLEDVSLASKLLRPAPVRALGGADKLSPNPEAEKVPRVYIKTAKDNLFDPLRQDRLVEKWPPSQLYILEESDHSAFFSVPTTLFAYLLRAVSFLQL</sequence>